<name>YP238_YEAST</name>
<proteinExistence type="uncertain"/>
<keyword id="KW-0472">Membrane</keyword>
<keyword id="KW-0812">Transmembrane</keyword>
<keyword id="KW-1133">Transmembrane helix</keyword>
<evidence type="ECO:0000255" key="1"/>
<evidence type="ECO:0000305" key="2"/>
<evidence type="ECO:0000305" key="3">
    <source>
    </source>
</evidence>
<comment type="subcellular location">
    <subcellularLocation>
        <location evidence="2">Membrane</location>
        <topology evidence="2">Multi-pass membrane protein</topology>
    </subcellularLocation>
</comment>
<comment type="miscellaneous">
    <text evidence="2">Almost completely overlaps SUI3.</text>
</comment>
<comment type="caution">
    <text evidence="3">Product of a dubious gene prediction unlikely to encode a functional protein. Because of that it is not part of the S.cerevisiae S288c complete/reference proteome set.</text>
</comment>
<gene>
    <name type="ordered locus">YPL238C</name>
    <name type="ORF">P1051</name>
</gene>
<reference key="1">
    <citation type="journal article" date="1997" name="Nature">
        <title>The nucleotide sequence of Saccharomyces cerevisiae chromosome XVI.</title>
        <authorList>
            <person name="Bussey H."/>
            <person name="Storms R.K."/>
            <person name="Ahmed A."/>
            <person name="Albermann K."/>
            <person name="Allen E."/>
            <person name="Ansorge W."/>
            <person name="Araujo R."/>
            <person name="Aparicio A."/>
            <person name="Barrell B.G."/>
            <person name="Badcock K."/>
            <person name="Benes V."/>
            <person name="Botstein D."/>
            <person name="Bowman S."/>
            <person name="Brueckner M."/>
            <person name="Carpenter J."/>
            <person name="Cherry J.M."/>
            <person name="Chung E."/>
            <person name="Churcher C.M."/>
            <person name="Coster F."/>
            <person name="Davis K."/>
            <person name="Davis R.W."/>
            <person name="Dietrich F.S."/>
            <person name="Delius H."/>
            <person name="DiPaolo T."/>
            <person name="Dubois E."/>
            <person name="Duesterhoeft A."/>
            <person name="Duncan M."/>
            <person name="Floeth M."/>
            <person name="Fortin N."/>
            <person name="Friesen J.D."/>
            <person name="Fritz C."/>
            <person name="Goffeau A."/>
            <person name="Hall J."/>
            <person name="Hebling U."/>
            <person name="Heumann K."/>
            <person name="Hilbert H."/>
            <person name="Hillier L.W."/>
            <person name="Hunicke-Smith S."/>
            <person name="Hyman R.W."/>
            <person name="Johnston M."/>
            <person name="Kalman S."/>
            <person name="Kleine K."/>
            <person name="Komp C."/>
            <person name="Kurdi O."/>
            <person name="Lashkari D."/>
            <person name="Lew H."/>
            <person name="Lin A."/>
            <person name="Lin D."/>
            <person name="Louis E.J."/>
            <person name="Marathe R."/>
            <person name="Messenguy F."/>
            <person name="Mewes H.-W."/>
            <person name="Mirtipati S."/>
            <person name="Moestl D."/>
            <person name="Mueller-Auer S."/>
            <person name="Namath A."/>
            <person name="Nentwich U."/>
            <person name="Oefner P."/>
            <person name="Pearson D."/>
            <person name="Petel F.X."/>
            <person name="Pohl T.M."/>
            <person name="Purnelle B."/>
            <person name="Rajandream M.A."/>
            <person name="Rechmann S."/>
            <person name="Rieger M."/>
            <person name="Riles L."/>
            <person name="Roberts D."/>
            <person name="Schaefer M."/>
            <person name="Scharfe M."/>
            <person name="Scherens B."/>
            <person name="Schramm S."/>
            <person name="Schroeder M."/>
            <person name="Sdicu A.-M."/>
            <person name="Tettelin H."/>
            <person name="Urrestarazu L.A."/>
            <person name="Ushinsky S."/>
            <person name="Vierendeels F."/>
            <person name="Vissers S."/>
            <person name="Voss H."/>
            <person name="Walsh S.V."/>
            <person name="Wambutt R."/>
            <person name="Wang Y."/>
            <person name="Wedler E."/>
            <person name="Wedler H."/>
            <person name="Winnett E."/>
            <person name="Zhong W.-W."/>
            <person name="Zollner A."/>
            <person name="Vo D.H."/>
            <person name="Hani J."/>
        </authorList>
    </citation>
    <scope>NUCLEOTIDE SEQUENCE [LARGE SCALE GENOMIC DNA]</scope>
    <source>
        <strain>ATCC 204508 / S288c</strain>
    </source>
</reference>
<reference key="2">
    <citation type="journal article" date="2014" name="G3 (Bethesda)">
        <title>The reference genome sequence of Saccharomyces cerevisiae: Then and now.</title>
        <authorList>
            <person name="Engel S.R."/>
            <person name="Dietrich F.S."/>
            <person name="Fisk D.G."/>
            <person name="Binkley G."/>
            <person name="Balakrishnan R."/>
            <person name="Costanzo M.C."/>
            <person name="Dwight S.S."/>
            <person name="Hitz B.C."/>
            <person name="Karra K."/>
            <person name="Nash R.S."/>
            <person name="Weng S."/>
            <person name="Wong E.D."/>
            <person name="Lloyd P."/>
            <person name="Skrzypek M.S."/>
            <person name="Miyasato S.R."/>
            <person name="Simison M."/>
            <person name="Cherry J.M."/>
        </authorList>
    </citation>
    <scope>GENOME REANNOTATION</scope>
    <source>
        <strain>ATCC 204508 / S288c</strain>
    </source>
</reference>
<feature type="chain" id="PRO_0000299811" description="Putative uncharacterized protein YPL238C">
    <location>
        <begin position="1"/>
        <end position="129"/>
    </location>
</feature>
<feature type="transmembrane region" description="Helical" evidence="1">
    <location>
        <begin position="22"/>
        <end position="42"/>
    </location>
</feature>
<feature type="transmembrane region" description="Helical" evidence="1">
    <location>
        <begin position="55"/>
        <end position="75"/>
    </location>
</feature>
<feature type="transmembrane region" description="Helical" evidence="1">
    <location>
        <begin position="88"/>
        <end position="108"/>
    </location>
</feature>
<accession>Q99401</accession>
<protein>
    <recommendedName>
        <fullName>Putative uncharacterized protein YPL238C</fullName>
    </recommendedName>
</protein>
<sequence>MLELALGVPSLLSASTLSRPALASSFSNASTLLSFVFFFFFFKDSSPKASAMSSVGSFSASASAETLLDFFFFFFNPANKSSPEPFSLPFTAASKSSGITFLVFFFFFSAGSNPNSAAKSEDISCVLII</sequence>
<dbReference type="EMBL" id="Z67751">
    <property type="protein sequence ID" value="CAA91606.1"/>
    <property type="molecule type" value="Genomic_DNA"/>
</dbReference>
<dbReference type="EMBL" id="Z73594">
    <property type="protein sequence ID" value="CAA97958.1"/>
    <property type="molecule type" value="Genomic_DNA"/>
</dbReference>
<dbReference type="PIR" id="S61026">
    <property type="entry name" value="S61026"/>
</dbReference>
<dbReference type="DIP" id="DIP-1552N"/>
<dbReference type="IntAct" id="Q99401">
    <property type="interactions" value="2"/>
</dbReference>
<dbReference type="MINT" id="Q99401"/>
<dbReference type="STRING" id="4932.YPL238C"/>
<dbReference type="PaxDb" id="4932-YPL238C"/>
<dbReference type="EnsemblFungi" id="YPL238C_mRNA">
    <property type="protein sequence ID" value="YPL238C"/>
    <property type="gene ID" value="YPL238C"/>
</dbReference>
<dbReference type="AGR" id="SGD:S000006159"/>
<dbReference type="SGD" id="S000006159">
    <property type="gene designation" value="YPL238C"/>
</dbReference>
<dbReference type="HOGENOM" id="CLU_1950507_0_0_1"/>
<dbReference type="GO" id="GO:0016020">
    <property type="term" value="C:membrane"/>
    <property type="evidence" value="ECO:0007669"/>
    <property type="project" value="UniProtKB-SubCell"/>
</dbReference>
<organism>
    <name type="scientific">Saccharomyces cerevisiae (strain ATCC 204508 / S288c)</name>
    <name type="common">Baker's yeast</name>
    <dbReference type="NCBI Taxonomy" id="559292"/>
    <lineage>
        <taxon>Eukaryota</taxon>
        <taxon>Fungi</taxon>
        <taxon>Dikarya</taxon>
        <taxon>Ascomycota</taxon>
        <taxon>Saccharomycotina</taxon>
        <taxon>Saccharomycetes</taxon>
        <taxon>Saccharomycetales</taxon>
        <taxon>Saccharomycetaceae</taxon>
        <taxon>Saccharomyces</taxon>
    </lineage>
</organism>